<sequence length="267" mass="30482">MTEYNWNERHIITFPEETLALATKDLHVYYGAKEAIKGIDMQFEKHKITALIGPSGCGKSTYLRSLNRMNDTIDIARVTGEILYQGIDVNRKDMNVYEIRKHLGMVFQRPNPFAKSIYKNITFAHERAGVKDKKVLDEIVETSLKQAALWDQVKDDLHKSAFTLSGGQQQRLCIARAISVKPDILLMDEPASALDPIATMQLEETMFELKKNYTIIIVTHNMQQAARASDYTAFFYLGNLIEYDKTRNIFQNAQCQSTNDYVSGHFG</sequence>
<name>PSTB2_STRPB</name>
<dbReference type="EC" id="7.3.2.1" evidence="1"/>
<dbReference type="EMBL" id="CP000261">
    <property type="protein sequence ID" value="ABF36064.1"/>
    <property type="molecule type" value="Genomic_DNA"/>
</dbReference>
<dbReference type="SMR" id="Q1JBJ4"/>
<dbReference type="KEGG" id="spj:MGAS2096_Spy1012"/>
<dbReference type="HOGENOM" id="CLU_000604_1_22_9"/>
<dbReference type="GO" id="GO:0005886">
    <property type="term" value="C:plasma membrane"/>
    <property type="evidence" value="ECO:0007669"/>
    <property type="project" value="UniProtKB-SubCell"/>
</dbReference>
<dbReference type="GO" id="GO:0005524">
    <property type="term" value="F:ATP binding"/>
    <property type="evidence" value="ECO:0007669"/>
    <property type="project" value="UniProtKB-KW"/>
</dbReference>
<dbReference type="GO" id="GO:0016887">
    <property type="term" value="F:ATP hydrolysis activity"/>
    <property type="evidence" value="ECO:0007669"/>
    <property type="project" value="InterPro"/>
</dbReference>
<dbReference type="GO" id="GO:0015415">
    <property type="term" value="F:ATPase-coupled phosphate ion transmembrane transporter activity"/>
    <property type="evidence" value="ECO:0007669"/>
    <property type="project" value="UniProtKB-EC"/>
</dbReference>
<dbReference type="GO" id="GO:0035435">
    <property type="term" value="P:phosphate ion transmembrane transport"/>
    <property type="evidence" value="ECO:0007669"/>
    <property type="project" value="InterPro"/>
</dbReference>
<dbReference type="CDD" id="cd03260">
    <property type="entry name" value="ABC_PstB_phosphate_transporter"/>
    <property type="match status" value="1"/>
</dbReference>
<dbReference type="Gene3D" id="3.40.50.300">
    <property type="entry name" value="P-loop containing nucleotide triphosphate hydrolases"/>
    <property type="match status" value="1"/>
</dbReference>
<dbReference type="InterPro" id="IPR003593">
    <property type="entry name" value="AAA+_ATPase"/>
</dbReference>
<dbReference type="InterPro" id="IPR003439">
    <property type="entry name" value="ABC_transporter-like_ATP-bd"/>
</dbReference>
<dbReference type="InterPro" id="IPR017871">
    <property type="entry name" value="ABC_transporter-like_CS"/>
</dbReference>
<dbReference type="InterPro" id="IPR027417">
    <property type="entry name" value="P-loop_NTPase"/>
</dbReference>
<dbReference type="InterPro" id="IPR005670">
    <property type="entry name" value="PstB-like"/>
</dbReference>
<dbReference type="NCBIfam" id="TIGR00972">
    <property type="entry name" value="3a0107s01c2"/>
    <property type="match status" value="1"/>
</dbReference>
<dbReference type="PANTHER" id="PTHR43423">
    <property type="entry name" value="ABC TRANSPORTER I FAMILY MEMBER 17"/>
    <property type="match status" value="1"/>
</dbReference>
<dbReference type="PANTHER" id="PTHR43423:SF10">
    <property type="entry name" value="PHOSPHATE IMPORT ATP-BINDING PROTEIN PSTB 2"/>
    <property type="match status" value="1"/>
</dbReference>
<dbReference type="Pfam" id="PF00005">
    <property type="entry name" value="ABC_tran"/>
    <property type="match status" value="1"/>
</dbReference>
<dbReference type="SMART" id="SM00382">
    <property type="entry name" value="AAA"/>
    <property type="match status" value="1"/>
</dbReference>
<dbReference type="SUPFAM" id="SSF52540">
    <property type="entry name" value="P-loop containing nucleoside triphosphate hydrolases"/>
    <property type="match status" value="1"/>
</dbReference>
<dbReference type="PROSITE" id="PS00211">
    <property type="entry name" value="ABC_TRANSPORTER_1"/>
    <property type="match status" value="1"/>
</dbReference>
<dbReference type="PROSITE" id="PS50893">
    <property type="entry name" value="ABC_TRANSPORTER_2"/>
    <property type="match status" value="1"/>
</dbReference>
<dbReference type="PROSITE" id="PS51238">
    <property type="entry name" value="PSTB"/>
    <property type="match status" value="1"/>
</dbReference>
<gene>
    <name evidence="1" type="primary">pstB2</name>
    <name type="ordered locus">MGAS2096_Spy1012</name>
</gene>
<accession>Q1JBJ4</accession>
<comment type="function">
    <text evidence="1">Part of the ABC transporter complex PstSACB involved in phosphate import. Responsible for energy coupling to the transport system.</text>
</comment>
<comment type="catalytic activity">
    <reaction evidence="1">
        <text>phosphate(out) + ATP + H2O = ADP + 2 phosphate(in) + H(+)</text>
        <dbReference type="Rhea" id="RHEA:24440"/>
        <dbReference type="ChEBI" id="CHEBI:15377"/>
        <dbReference type="ChEBI" id="CHEBI:15378"/>
        <dbReference type="ChEBI" id="CHEBI:30616"/>
        <dbReference type="ChEBI" id="CHEBI:43474"/>
        <dbReference type="ChEBI" id="CHEBI:456216"/>
        <dbReference type="EC" id="7.3.2.1"/>
    </reaction>
</comment>
<comment type="subunit">
    <text evidence="1">The complex is composed of two ATP-binding proteins (PstB), two transmembrane proteins (PstC and PstA) and a solute-binding protein (PstS).</text>
</comment>
<comment type="subcellular location">
    <subcellularLocation>
        <location evidence="1">Cell membrane</location>
        <topology evidence="1">Peripheral membrane protein</topology>
    </subcellularLocation>
</comment>
<comment type="similarity">
    <text evidence="1">Belongs to the ABC transporter superfamily. Phosphate importer (TC 3.A.1.7) family.</text>
</comment>
<proteinExistence type="inferred from homology"/>
<feature type="chain" id="PRO_0000272542" description="Phosphate import ATP-binding protein PstB 2">
    <location>
        <begin position="1"/>
        <end position="267"/>
    </location>
</feature>
<feature type="domain" description="ABC transporter" evidence="1">
    <location>
        <begin position="21"/>
        <end position="262"/>
    </location>
</feature>
<feature type="binding site" evidence="1">
    <location>
        <begin position="53"/>
        <end position="60"/>
    </location>
    <ligand>
        <name>ATP</name>
        <dbReference type="ChEBI" id="CHEBI:30616"/>
    </ligand>
</feature>
<protein>
    <recommendedName>
        <fullName evidence="1">Phosphate import ATP-binding protein PstB 2</fullName>
        <ecNumber evidence="1">7.3.2.1</ecNumber>
    </recommendedName>
    <alternativeName>
        <fullName evidence="1">ABC phosphate transporter 2</fullName>
    </alternativeName>
    <alternativeName>
        <fullName evidence="1">Phosphate-transporting ATPase 2</fullName>
    </alternativeName>
</protein>
<reference key="1">
    <citation type="journal article" date="2006" name="Proc. Natl. Acad. Sci. U.S.A.">
        <title>Molecular genetic anatomy of inter- and intraserotype variation in the human bacterial pathogen group A Streptococcus.</title>
        <authorList>
            <person name="Beres S.B."/>
            <person name="Richter E.W."/>
            <person name="Nagiec M.J."/>
            <person name="Sumby P."/>
            <person name="Porcella S.F."/>
            <person name="DeLeo F.R."/>
            <person name="Musser J.M."/>
        </authorList>
    </citation>
    <scope>NUCLEOTIDE SEQUENCE [LARGE SCALE GENOMIC DNA]</scope>
    <source>
        <strain>MGAS2096</strain>
    </source>
</reference>
<evidence type="ECO:0000255" key="1">
    <source>
        <dbReference type="HAMAP-Rule" id="MF_01702"/>
    </source>
</evidence>
<keyword id="KW-0067">ATP-binding</keyword>
<keyword id="KW-1003">Cell membrane</keyword>
<keyword id="KW-0472">Membrane</keyword>
<keyword id="KW-0547">Nucleotide-binding</keyword>
<keyword id="KW-0592">Phosphate transport</keyword>
<keyword id="KW-1278">Translocase</keyword>
<keyword id="KW-0813">Transport</keyword>
<organism>
    <name type="scientific">Streptococcus pyogenes serotype M12 (strain MGAS2096)</name>
    <dbReference type="NCBI Taxonomy" id="370553"/>
    <lineage>
        <taxon>Bacteria</taxon>
        <taxon>Bacillati</taxon>
        <taxon>Bacillota</taxon>
        <taxon>Bacilli</taxon>
        <taxon>Lactobacillales</taxon>
        <taxon>Streptococcaceae</taxon>
        <taxon>Streptococcus</taxon>
    </lineage>
</organism>